<proteinExistence type="inferred from homology"/>
<organism>
    <name type="scientific">Porphyromonas gingivalis (strain ATCC BAA-308 / W83)</name>
    <dbReference type="NCBI Taxonomy" id="242619"/>
    <lineage>
        <taxon>Bacteria</taxon>
        <taxon>Pseudomonadati</taxon>
        <taxon>Bacteroidota</taxon>
        <taxon>Bacteroidia</taxon>
        <taxon>Bacteroidales</taxon>
        <taxon>Porphyromonadaceae</taxon>
        <taxon>Porphyromonas</taxon>
    </lineage>
</organism>
<protein>
    <recommendedName>
        <fullName evidence="1">NADPH-dependent 7-cyano-7-deazaguanine reductase</fullName>
        <ecNumber evidence="1">1.7.1.13</ecNumber>
    </recommendedName>
    <alternativeName>
        <fullName evidence="1">7-cyano-7-carbaguanine reductase</fullName>
    </alternativeName>
    <alternativeName>
        <fullName evidence="1">NADPH-dependent nitrile oxidoreductase</fullName>
    </alternativeName>
    <alternativeName>
        <fullName evidence="1">PreQ(0) reductase</fullName>
    </alternativeName>
</protein>
<dbReference type="EC" id="1.7.1.13" evidence="1"/>
<dbReference type="EMBL" id="AE015924">
    <property type="protein sequence ID" value="AAQ66412.1"/>
    <property type="molecule type" value="Genomic_DNA"/>
</dbReference>
<dbReference type="RefSeq" id="WP_005874066.1">
    <property type="nucleotide sequence ID" value="NC_002950.2"/>
</dbReference>
<dbReference type="SMR" id="Q7MUX8"/>
<dbReference type="STRING" id="242619.PG_1347"/>
<dbReference type="EnsemblBacteria" id="AAQ66412">
    <property type="protein sequence ID" value="AAQ66412"/>
    <property type="gene ID" value="PG_1347"/>
</dbReference>
<dbReference type="GeneID" id="29256342"/>
<dbReference type="KEGG" id="pgi:PG_1347"/>
<dbReference type="eggNOG" id="COG0780">
    <property type="taxonomic scope" value="Bacteria"/>
</dbReference>
<dbReference type="HOGENOM" id="CLU_102489_0_1_10"/>
<dbReference type="UniPathway" id="UPA00392"/>
<dbReference type="Proteomes" id="UP000000588">
    <property type="component" value="Chromosome"/>
</dbReference>
<dbReference type="GO" id="GO:0005737">
    <property type="term" value="C:cytoplasm"/>
    <property type="evidence" value="ECO:0007669"/>
    <property type="project" value="UniProtKB-SubCell"/>
</dbReference>
<dbReference type="GO" id="GO:0033739">
    <property type="term" value="F:preQ1 synthase activity"/>
    <property type="evidence" value="ECO:0007669"/>
    <property type="project" value="UniProtKB-UniRule"/>
</dbReference>
<dbReference type="GO" id="GO:0008616">
    <property type="term" value="P:queuosine biosynthetic process"/>
    <property type="evidence" value="ECO:0007669"/>
    <property type="project" value="UniProtKB-UniRule"/>
</dbReference>
<dbReference type="GO" id="GO:0006400">
    <property type="term" value="P:tRNA modification"/>
    <property type="evidence" value="ECO:0007669"/>
    <property type="project" value="UniProtKB-UniRule"/>
</dbReference>
<dbReference type="Gene3D" id="3.30.1130.10">
    <property type="match status" value="1"/>
</dbReference>
<dbReference type="HAMAP" id="MF_00818">
    <property type="entry name" value="QueF_type1"/>
    <property type="match status" value="1"/>
</dbReference>
<dbReference type="InterPro" id="IPR043133">
    <property type="entry name" value="GTP-CH-I_C/QueF"/>
</dbReference>
<dbReference type="InterPro" id="IPR050084">
    <property type="entry name" value="NADPH_dep_7-cyano-7-deazaG_red"/>
</dbReference>
<dbReference type="InterPro" id="IPR029500">
    <property type="entry name" value="QueF"/>
</dbReference>
<dbReference type="InterPro" id="IPR016856">
    <property type="entry name" value="QueF_type1"/>
</dbReference>
<dbReference type="NCBIfam" id="TIGR03139">
    <property type="entry name" value="QueF-II"/>
    <property type="match status" value="1"/>
</dbReference>
<dbReference type="PANTHER" id="PTHR34354">
    <property type="entry name" value="NADPH-DEPENDENT 7-CYANO-7-DEAZAGUANINE REDUCTASE"/>
    <property type="match status" value="1"/>
</dbReference>
<dbReference type="PANTHER" id="PTHR34354:SF1">
    <property type="entry name" value="NADPH-DEPENDENT 7-CYANO-7-DEAZAGUANINE REDUCTASE"/>
    <property type="match status" value="1"/>
</dbReference>
<dbReference type="Pfam" id="PF14489">
    <property type="entry name" value="QueF"/>
    <property type="match status" value="1"/>
</dbReference>
<dbReference type="PIRSF" id="PIRSF027377">
    <property type="entry name" value="Nitrile_oxidored_QueF"/>
    <property type="match status" value="1"/>
</dbReference>
<dbReference type="SUPFAM" id="SSF55620">
    <property type="entry name" value="Tetrahydrobiopterin biosynthesis enzymes-like"/>
    <property type="match status" value="1"/>
</dbReference>
<accession>Q7MUX8</accession>
<reference key="1">
    <citation type="journal article" date="2003" name="J. Bacteriol.">
        <title>Complete genome sequence of the oral pathogenic bacterium Porphyromonas gingivalis strain W83.</title>
        <authorList>
            <person name="Nelson K.E."/>
            <person name="Fleischmann R.D."/>
            <person name="DeBoy R.T."/>
            <person name="Paulsen I.T."/>
            <person name="Fouts D.E."/>
            <person name="Eisen J.A."/>
            <person name="Daugherty S.C."/>
            <person name="Dodson R.J."/>
            <person name="Durkin A.S."/>
            <person name="Gwinn M.L."/>
            <person name="Haft D.H."/>
            <person name="Kolonay J.F."/>
            <person name="Nelson W.C."/>
            <person name="Mason T.M."/>
            <person name="Tallon L."/>
            <person name="Gray J."/>
            <person name="Granger D."/>
            <person name="Tettelin H."/>
            <person name="Dong H."/>
            <person name="Galvin J.L."/>
            <person name="Duncan M.J."/>
            <person name="Dewhirst F.E."/>
            <person name="Fraser C.M."/>
        </authorList>
    </citation>
    <scope>NUCLEOTIDE SEQUENCE [LARGE SCALE GENOMIC DNA]</scope>
    <source>
        <strain>ATCC BAA-308 / W83</strain>
    </source>
</reference>
<sequence length="154" mass="17924">MTGIREGEKELSLLGSKTEYRNDYAPEVLEAFTNKHQENDYWVRFNCPEFTSLCPITGQPDFATIYINYIPDVKMVESKSLKLYLFSFRNHGAFHEDCVNIIMKDLIALMQPRYIEVWGDFTPRGGISIVPFCNYGKPGSRYELLAEKRMETHH</sequence>
<feature type="chain" id="PRO_0000162985" description="NADPH-dependent 7-cyano-7-deazaguanine reductase">
    <location>
        <begin position="1"/>
        <end position="154"/>
    </location>
</feature>
<feature type="active site" description="Thioimide intermediate" evidence="1">
    <location>
        <position position="54"/>
    </location>
</feature>
<feature type="active site" description="Proton donor" evidence="1">
    <location>
        <position position="61"/>
    </location>
</feature>
<feature type="binding site" evidence="1">
    <location>
        <begin position="76"/>
        <end position="78"/>
    </location>
    <ligand>
        <name>substrate</name>
    </ligand>
</feature>
<feature type="binding site" evidence="1">
    <location>
        <begin position="95"/>
        <end position="96"/>
    </location>
    <ligand>
        <name>substrate</name>
    </ligand>
</feature>
<name>QUEF_PORGI</name>
<comment type="function">
    <text evidence="1">Catalyzes the NADPH-dependent reduction of 7-cyano-7-deazaguanine (preQ0) to 7-aminomethyl-7-deazaguanine (preQ1).</text>
</comment>
<comment type="catalytic activity">
    <reaction evidence="1">
        <text>7-aminomethyl-7-carbaguanine + 2 NADP(+) = 7-cyano-7-deazaguanine + 2 NADPH + 3 H(+)</text>
        <dbReference type="Rhea" id="RHEA:13409"/>
        <dbReference type="ChEBI" id="CHEBI:15378"/>
        <dbReference type="ChEBI" id="CHEBI:45075"/>
        <dbReference type="ChEBI" id="CHEBI:57783"/>
        <dbReference type="ChEBI" id="CHEBI:58349"/>
        <dbReference type="ChEBI" id="CHEBI:58703"/>
        <dbReference type="EC" id="1.7.1.13"/>
    </reaction>
</comment>
<comment type="pathway">
    <text evidence="1">tRNA modification; tRNA-queuosine biosynthesis.</text>
</comment>
<comment type="subcellular location">
    <subcellularLocation>
        <location evidence="1">Cytoplasm</location>
    </subcellularLocation>
</comment>
<comment type="similarity">
    <text evidence="1">Belongs to the GTP cyclohydrolase I family. QueF type 1 subfamily.</text>
</comment>
<gene>
    <name evidence="1" type="primary">queF</name>
    <name type="ordered locus">PG_1347</name>
</gene>
<keyword id="KW-0963">Cytoplasm</keyword>
<keyword id="KW-0521">NADP</keyword>
<keyword id="KW-0560">Oxidoreductase</keyword>
<keyword id="KW-0671">Queuosine biosynthesis</keyword>
<keyword id="KW-1185">Reference proteome</keyword>
<evidence type="ECO:0000255" key="1">
    <source>
        <dbReference type="HAMAP-Rule" id="MF_00818"/>
    </source>
</evidence>